<dbReference type="EMBL" id="AB007638">
    <property type="protein sequence ID" value="BAA22763.1"/>
    <property type="molecule type" value="Genomic_DNA"/>
</dbReference>
<dbReference type="EMBL" id="AL009126">
    <property type="protein sequence ID" value="CAB12439.1"/>
    <property type="molecule type" value="Genomic_DNA"/>
</dbReference>
<dbReference type="PIR" id="D69789">
    <property type="entry name" value="D69789"/>
</dbReference>
<dbReference type="RefSeq" id="NP_388501.1">
    <property type="nucleotide sequence ID" value="NC_000964.3"/>
</dbReference>
<dbReference type="RefSeq" id="WP_003242723.1">
    <property type="nucleotide sequence ID" value="NZ_OZ025638.1"/>
</dbReference>
<dbReference type="SMR" id="O35004"/>
<dbReference type="FunCoup" id="O35004">
    <property type="interactions" value="28"/>
</dbReference>
<dbReference type="STRING" id="224308.BSU06200"/>
<dbReference type="PaxDb" id="224308-BSU06200"/>
<dbReference type="DNASU" id="936015"/>
<dbReference type="EnsemblBacteria" id="CAB12439">
    <property type="protein sequence ID" value="CAB12439"/>
    <property type="gene ID" value="BSU_06200"/>
</dbReference>
<dbReference type="GeneID" id="936015"/>
<dbReference type="KEGG" id="bsu:BSU06200"/>
<dbReference type="PATRIC" id="fig|224308.179.peg.671"/>
<dbReference type="eggNOG" id="COG1512">
    <property type="taxonomic scope" value="Bacteria"/>
</dbReference>
<dbReference type="InParanoid" id="O35004"/>
<dbReference type="OrthoDB" id="9806054at2"/>
<dbReference type="BioCyc" id="BSUB:BSU06200-MONOMER"/>
<dbReference type="Proteomes" id="UP000001570">
    <property type="component" value="Chromosome"/>
</dbReference>
<dbReference type="GO" id="GO:0005886">
    <property type="term" value="C:plasma membrane"/>
    <property type="evidence" value="ECO:0007669"/>
    <property type="project" value="UniProtKB-SubCell"/>
</dbReference>
<dbReference type="Gene3D" id="3.10.310.50">
    <property type="match status" value="1"/>
</dbReference>
<dbReference type="InterPro" id="IPR007621">
    <property type="entry name" value="TPM_dom"/>
</dbReference>
<dbReference type="Pfam" id="PF04536">
    <property type="entry name" value="TPM_phosphatase"/>
    <property type="match status" value="1"/>
</dbReference>
<gene>
    <name type="primary">ydjH</name>
    <name type="ordered locus">BSU06200</name>
</gene>
<keyword id="KW-1003">Cell membrane</keyword>
<keyword id="KW-0472">Membrane</keyword>
<keyword id="KW-1185">Reference proteome</keyword>
<keyword id="KW-0732">Signal</keyword>
<keyword id="KW-0812">Transmembrane</keyword>
<keyword id="KW-1133">Transmembrane helix</keyword>
<evidence type="ECO:0000255" key="1"/>
<evidence type="ECO:0000256" key="2">
    <source>
        <dbReference type="SAM" id="MobiDB-lite"/>
    </source>
</evidence>
<evidence type="ECO:0000305" key="3"/>
<comment type="subcellular location">
    <subcellularLocation>
        <location evidence="3">Cell membrane</location>
        <topology evidence="3">Single-pass type I membrane protein</topology>
    </subcellularLocation>
</comment>
<comment type="similarity">
    <text evidence="3">Belongs to the UPF0603 family.</text>
</comment>
<reference key="1">
    <citation type="journal article" date="1997" name="DNA Res.">
        <title>Sequence analysis of the groESL-cotA region of the Bacillus subtilis genome, containing the restriction/modification system genes.</title>
        <authorList>
            <person name="Kasahara Y."/>
            <person name="Nakai S."/>
            <person name="Ogasawara N."/>
            <person name="Yata K."/>
            <person name="Sadaie Y."/>
        </authorList>
    </citation>
    <scope>NUCLEOTIDE SEQUENCE [GENOMIC DNA]</scope>
    <source>
        <strain>168 / Marburg / ATCC 6051 / DSM 10 / JCM 1465 / NBRC 13719 / NCIMB 3610 / NRRL NRS-744 / VKM B-501</strain>
    </source>
</reference>
<reference key="2">
    <citation type="journal article" date="1997" name="Nature">
        <title>The complete genome sequence of the Gram-positive bacterium Bacillus subtilis.</title>
        <authorList>
            <person name="Kunst F."/>
            <person name="Ogasawara N."/>
            <person name="Moszer I."/>
            <person name="Albertini A.M."/>
            <person name="Alloni G."/>
            <person name="Azevedo V."/>
            <person name="Bertero M.G."/>
            <person name="Bessieres P."/>
            <person name="Bolotin A."/>
            <person name="Borchert S."/>
            <person name="Borriss R."/>
            <person name="Boursier L."/>
            <person name="Brans A."/>
            <person name="Braun M."/>
            <person name="Brignell S.C."/>
            <person name="Bron S."/>
            <person name="Brouillet S."/>
            <person name="Bruschi C.V."/>
            <person name="Caldwell B."/>
            <person name="Capuano V."/>
            <person name="Carter N.M."/>
            <person name="Choi S.-K."/>
            <person name="Codani J.-J."/>
            <person name="Connerton I.F."/>
            <person name="Cummings N.J."/>
            <person name="Daniel R.A."/>
            <person name="Denizot F."/>
            <person name="Devine K.M."/>
            <person name="Duesterhoeft A."/>
            <person name="Ehrlich S.D."/>
            <person name="Emmerson P.T."/>
            <person name="Entian K.-D."/>
            <person name="Errington J."/>
            <person name="Fabret C."/>
            <person name="Ferrari E."/>
            <person name="Foulger D."/>
            <person name="Fritz C."/>
            <person name="Fujita M."/>
            <person name="Fujita Y."/>
            <person name="Fuma S."/>
            <person name="Galizzi A."/>
            <person name="Galleron N."/>
            <person name="Ghim S.-Y."/>
            <person name="Glaser P."/>
            <person name="Goffeau A."/>
            <person name="Golightly E.J."/>
            <person name="Grandi G."/>
            <person name="Guiseppi G."/>
            <person name="Guy B.J."/>
            <person name="Haga K."/>
            <person name="Haiech J."/>
            <person name="Harwood C.R."/>
            <person name="Henaut A."/>
            <person name="Hilbert H."/>
            <person name="Holsappel S."/>
            <person name="Hosono S."/>
            <person name="Hullo M.-F."/>
            <person name="Itaya M."/>
            <person name="Jones L.-M."/>
            <person name="Joris B."/>
            <person name="Karamata D."/>
            <person name="Kasahara Y."/>
            <person name="Klaerr-Blanchard M."/>
            <person name="Klein C."/>
            <person name="Kobayashi Y."/>
            <person name="Koetter P."/>
            <person name="Koningstein G."/>
            <person name="Krogh S."/>
            <person name="Kumano M."/>
            <person name="Kurita K."/>
            <person name="Lapidus A."/>
            <person name="Lardinois S."/>
            <person name="Lauber J."/>
            <person name="Lazarevic V."/>
            <person name="Lee S.-M."/>
            <person name="Levine A."/>
            <person name="Liu H."/>
            <person name="Masuda S."/>
            <person name="Mauel C."/>
            <person name="Medigue C."/>
            <person name="Medina N."/>
            <person name="Mellado R.P."/>
            <person name="Mizuno M."/>
            <person name="Moestl D."/>
            <person name="Nakai S."/>
            <person name="Noback M."/>
            <person name="Noone D."/>
            <person name="O'Reilly M."/>
            <person name="Ogawa K."/>
            <person name="Ogiwara A."/>
            <person name="Oudega B."/>
            <person name="Park S.-H."/>
            <person name="Parro V."/>
            <person name="Pohl T.M."/>
            <person name="Portetelle D."/>
            <person name="Porwollik S."/>
            <person name="Prescott A.M."/>
            <person name="Presecan E."/>
            <person name="Pujic P."/>
            <person name="Purnelle B."/>
            <person name="Rapoport G."/>
            <person name="Rey M."/>
            <person name="Reynolds S."/>
            <person name="Rieger M."/>
            <person name="Rivolta C."/>
            <person name="Rocha E."/>
            <person name="Roche B."/>
            <person name="Rose M."/>
            <person name="Sadaie Y."/>
            <person name="Sato T."/>
            <person name="Scanlan E."/>
            <person name="Schleich S."/>
            <person name="Schroeter R."/>
            <person name="Scoffone F."/>
            <person name="Sekiguchi J."/>
            <person name="Sekowska A."/>
            <person name="Seror S.J."/>
            <person name="Serror P."/>
            <person name="Shin B.-S."/>
            <person name="Soldo B."/>
            <person name="Sorokin A."/>
            <person name="Tacconi E."/>
            <person name="Takagi T."/>
            <person name="Takahashi H."/>
            <person name="Takemaru K."/>
            <person name="Takeuchi M."/>
            <person name="Tamakoshi A."/>
            <person name="Tanaka T."/>
            <person name="Terpstra P."/>
            <person name="Tognoni A."/>
            <person name="Tosato V."/>
            <person name="Uchiyama S."/>
            <person name="Vandenbol M."/>
            <person name="Vannier F."/>
            <person name="Vassarotti A."/>
            <person name="Viari A."/>
            <person name="Wambutt R."/>
            <person name="Wedler E."/>
            <person name="Wedler H."/>
            <person name="Weitzenegger T."/>
            <person name="Winters P."/>
            <person name="Wipat A."/>
            <person name="Yamamoto H."/>
            <person name="Yamane K."/>
            <person name="Yasumoto K."/>
            <person name="Yata K."/>
            <person name="Yoshida K."/>
            <person name="Yoshikawa H.-F."/>
            <person name="Zumstein E."/>
            <person name="Yoshikawa H."/>
            <person name="Danchin A."/>
        </authorList>
    </citation>
    <scope>NUCLEOTIDE SEQUENCE [LARGE SCALE GENOMIC DNA]</scope>
    <source>
        <strain>168</strain>
    </source>
</reference>
<protein>
    <recommendedName>
        <fullName>UPF0603 protein YdjH</fullName>
    </recommendedName>
</protein>
<accession>O35004</accession>
<accession>Q797C6</accession>
<feature type="signal peptide" evidence="1">
    <location>
        <begin position="1"/>
        <end position="29"/>
    </location>
</feature>
<feature type="chain" id="PRO_0000360751" description="UPF0603 protein YdjH">
    <location>
        <begin position="30"/>
        <end position="254"/>
    </location>
</feature>
<feature type="transmembrane region" description="Helical" evidence="1">
    <location>
        <begin position="166"/>
        <end position="186"/>
    </location>
</feature>
<feature type="region of interest" description="Disordered" evidence="2">
    <location>
        <begin position="223"/>
        <end position="254"/>
    </location>
</feature>
<feature type="compositionally biased region" description="Basic and acidic residues" evidence="2">
    <location>
        <begin position="223"/>
        <end position="235"/>
    </location>
</feature>
<feature type="compositionally biased region" description="Polar residues" evidence="2">
    <location>
        <begin position="243"/>
        <end position="254"/>
    </location>
</feature>
<organism>
    <name type="scientific">Bacillus subtilis (strain 168)</name>
    <dbReference type="NCBI Taxonomy" id="224308"/>
    <lineage>
        <taxon>Bacteria</taxon>
        <taxon>Bacillati</taxon>
        <taxon>Bacillota</taxon>
        <taxon>Bacilli</taxon>
        <taxon>Bacillales</taxon>
        <taxon>Bacillaceae</taxon>
        <taxon>Bacillus</taxon>
    </lineage>
</organism>
<proteinExistence type="inferred from homology"/>
<name>YDJH_BACSU</name>
<sequence length="254" mass="28163">MRGFFGKAIFVVLAVFIMMPLLGIEAVRASELQQHVYDRAHLLSKAEIGKLESLSAKLGAKRDTDFIIITTKSTNGEDIADYTGDFYDRYGKGSTAILTIDMTNREVFIAGFKKAEQYLDNSRLNSIRNTISSDLSNENYFEAFETYIQLSYKDMGIKPGVNPDNIFFTWWFQLIAAIAVGGIAVSIMLYHAGGKVTVNGSTYMDQRTSDVIDQYDTYIRTTVTRERKPSDKDSGSDGGVTKGGTSYSGSRGSF</sequence>